<feature type="chain" id="PRO_0000245524" description="Zinc-regulated GTPase metalloprotein activator 1">
    <location>
        <begin position="1"/>
        <end position="393"/>
    </location>
</feature>
<feature type="domain" description="CobW C-terminal">
    <location>
        <begin position="271"/>
        <end position="374"/>
    </location>
</feature>
<feature type="short sequence motif" description="psi-PxLVp motif" evidence="3">
    <location>
        <begin position="16"/>
        <end position="23"/>
    </location>
</feature>
<feature type="short sequence motif" description="CXCC motif" evidence="7">
    <location>
        <begin position="105"/>
        <end position="108"/>
    </location>
</feature>
<feature type="binding site" evidence="1">
    <location>
        <begin position="47"/>
        <end position="54"/>
    </location>
    <ligand>
        <name>GTP</name>
        <dbReference type="ChEBI" id="CHEBI:37565"/>
    </ligand>
</feature>
<feature type="binding site" evidence="7">
    <location>
        <position position="105"/>
    </location>
    <ligand>
        <name>Zn(2+)</name>
        <dbReference type="ChEBI" id="CHEBI:29105"/>
    </ligand>
</feature>
<feature type="binding site" evidence="7">
    <location>
        <position position="107"/>
    </location>
    <ligand>
        <name>Zn(2+)</name>
        <dbReference type="ChEBI" id="CHEBI:29105"/>
    </ligand>
</feature>
<feature type="binding site" evidence="1">
    <location>
        <begin position="108"/>
        <end position="112"/>
    </location>
    <ligand>
        <name>GTP</name>
        <dbReference type="ChEBI" id="CHEBI:37565"/>
    </ligand>
</feature>
<feature type="binding site" evidence="7">
    <location>
        <position position="108"/>
    </location>
    <ligand>
        <name>Zn(2+)</name>
        <dbReference type="ChEBI" id="CHEBI:29105"/>
    </ligand>
</feature>
<feature type="binding site" evidence="1">
    <location>
        <begin position="201"/>
        <end position="204"/>
    </location>
    <ligand>
        <name>GTP</name>
        <dbReference type="ChEBI" id="CHEBI:37565"/>
    </ligand>
</feature>
<feature type="splice variant" id="VSP_019735" description="In isoform 2." evidence="4">
    <location>
        <begin position="1"/>
        <end position="121"/>
    </location>
</feature>
<dbReference type="EC" id="3.6.5.-" evidence="3"/>
<dbReference type="EMBL" id="AK132291">
    <property type="protein sequence ID" value="BAE21084.1"/>
    <property type="molecule type" value="mRNA"/>
</dbReference>
<dbReference type="EMBL" id="BC018472">
    <property type="protein sequence ID" value="AAH18472.1"/>
    <property type="molecule type" value="mRNA"/>
</dbReference>
<dbReference type="EMBL" id="BC027643">
    <property type="protein sequence ID" value="AAH27643.1"/>
    <property type="molecule type" value="mRNA"/>
</dbReference>
<dbReference type="EMBL" id="BC053745">
    <property type="protein sequence ID" value="AAH53745.1"/>
    <property type="molecule type" value="mRNA"/>
</dbReference>
<dbReference type="CCDS" id="CCDS37942.1">
    <molecule id="Q8VEH6-1"/>
</dbReference>
<dbReference type="RefSeq" id="NP_666209.1">
    <molecule id="Q8VEH6-1"/>
    <property type="nucleotide sequence ID" value="NM_146097.3"/>
</dbReference>
<dbReference type="PDB" id="7SEK">
    <property type="method" value="NMR"/>
    <property type="chains" value="A=10-30"/>
</dbReference>
<dbReference type="PDBsum" id="7SEK"/>
<dbReference type="SMR" id="Q8VEH6"/>
<dbReference type="BioGRID" id="230464">
    <property type="interactions" value="4"/>
</dbReference>
<dbReference type="FunCoup" id="Q8VEH6">
    <property type="interactions" value="1333"/>
</dbReference>
<dbReference type="STRING" id="10090.ENSMUSP00000025815"/>
<dbReference type="GlyGen" id="Q8VEH6">
    <property type="glycosylation" value="1 site, 1 O-linked glycan (1 site)"/>
</dbReference>
<dbReference type="PhosphoSitePlus" id="Q8VEH6"/>
<dbReference type="SwissPalm" id="Q8VEH6"/>
<dbReference type="REPRODUCTION-2DPAGE" id="Q8VEH6"/>
<dbReference type="PaxDb" id="10090-ENSMUSP00000025815"/>
<dbReference type="PeptideAtlas" id="Q8VEH6"/>
<dbReference type="ProteomicsDB" id="281413">
    <molecule id="Q8VEH6-1"/>
</dbReference>
<dbReference type="ProteomicsDB" id="281414">
    <molecule id="Q8VEH6-2"/>
</dbReference>
<dbReference type="Pumba" id="Q8VEH6"/>
<dbReference type="DNASU" id="226043"/>
<dbReference type="Ensembl" id="ENSMUST00000025815.10">
    <molecule id="Q8VEH6-1"/>
    <property type="protein sequence ID" value="ENSMUSP00000025815.9"/>
    <property type="gene ID" value="ENSMUSG00000024878.10"/>
</dbReference>
<dbReference type="GeneID" id="226043"/>
<dbReference type="KEGG" id="mmu:226043"/>
<dbReference type="UCSC" id="uc008haw.2">
    <molecule id="Q8VEH6-1"/>
    <property type="organism name" value="mouse"/>
</dbReference>
<dbReference type="AGR" id="MGI:2385089"/>
<dbReference type="CTD" id="226043"/>
<dbReference type="MGI" id="MGI:2385089">
    <property type="gene designation" value="Zng1"/>
</dbReference>
<dbReference type="VEuPathDB" id="HostDB:ENSMUSG00000024878"/>
<dbReference type="eggNOG" id="KOG2743">
    <property type="taxonomic scope" value="Eukaryota"/>
</dbReference>
<dbReference type="GeneTree" id="ENSGT00640000091523"/>
<dbReference type="HOGENOM" id="CLU_017452_0_1_1"/>
<dbReference type="InParanoid" id="Q8VEH6"/>
<dbReference type="OMA" id="HSQGFET"/>
<dbReference type="OrthoDB" id="258627at2759"/>
<dbReference type="PhylomeDB" id="Q8VEH6"/>
<dbReference type="TreeFam" id="TF332679"/>
<dbReference type="BioGRID-ORCS" id="226043">
    <property type="hits" value="8 hits in 80 CRISPR screens"/>
</dbReference>
<dbReference type="ChiTaRS" id="Cbwd1">
    <property type="organism name" value="mouse"/>
</dbReference>
<dbReference type="PRO" id="PR:Q8VEH6"/>
<dbReference type="Proteomes" id="UP000000589">
    <property type="component" value="Chromosome 19"/>
</dbReference>
<dbReference type="RNAct" id="Q8VEH6">
    <property type="molecule type" value="protein"/>
</dbReference>
<dbReference type="Bgee" id="ENSMUSG00000024878">
    <property type="expression patterns" value="Expressed in spermatocyte and 228 other cell types or tissues"/>
</dbReference>
<dbReference type="ExpressionAtlas" id="Q8VEH6">
    <property type="expression patterns" value="baseline and differential"/>
</dbReference>
<dbReference type="GO" id="GO:0005634">
    <property type="term" value="C:nucleus"/>
    <property type="evidence" value="ECO:0000314"/>
    <property type="project" value="UniProtKB"/>
</dbReference>
<dbReference type="GO" id="GO:0005525">
    <property type="term" value="F:GTP binding"/>
    <property type="evidence" value="ECO:0007669"/>
    <property type="project" value="UniProtKB-KW"/>
</dbReference>
<dbReference type="GO" id="GO:0003924">
    <property type="term" value="F:GTPase activity"/>
    <property type="evidence" value="ECO:0000314"/>
    <property type="project" value="UniProtKB"/>
</dbReference>
<dbReference type="GO" id="GO:0140827">
    <property type="term" value="F:zinc chaperone activity"/>
    <property type="evidence" value="ECO:0000314"/>
    <property type="project" value="UniProtKB"/>
</dbReference>
<dbReference type="GO" id="GO:0006882">
    <property type="term" value="P:intracellular zinc ion homeostasis"/>
    <property type="evidence" value="ECO:0000314"/>
    <property type="project" value="UniProtKB"/>
</dbReference>
<dbReference type="GO" id="GO:0001822">
    <property type="term" value="P:kidney development"/>
    <property type="evidence" value="ECO:0000315"/>
    <property type="project" value="UniProtKB"/>
</dbReference>
<dbReference type="GO" id="GO:0051604">
    <property type="term" value="P:protein maturation"/>
    <property type="evidence" value="ECO:0000314"/>
    <property type="project" value="UniProt"/>
</dbReference>
<dbReference type="CDD" id="cd03112">
    <property type="entry name" value="CobW-like"/>
    <property type="match status" value="1"/>
</dbReference>
<dbReference type="Gene3D" id="3.30.1220.10">
    <property type="entry name" value="CobW-like, C-terminal domain"/>
    <property type="match status" value="1"/>
</dbReference>
<dbReference type="Gene3D" id="3.40.50.300">
    <property type="entry name" value="P-loop containing nucleotide triphosphate hydrolases"/>
    <property type="match status" value="1"/>
</dbReference>
<dbReference type="InterPro" id="IPR036627">
    <property type="entry name" value="CobW-likC_sf"/>
</dbReference>
<dbReference type="InterPro" id="IPR011629">
    <property type="entry name" value="CobW-like_C"/>
</dbReference>
<dbReference type="InterPro" id="IPR003495">
    <property type="entry name" value="CobW/HypB/UreG_nucleotide-bd"/>
</dbReference>
<dbReference type="InterPro" id="IPR027417">
    <property type="entry name" value="P-loop_NTPase"/>
</dbReference>
<dbReference type="InterPro" id="IPR051316">
    <property type="entry name" value="Zinc-reg_GTPase_activator"/>
</dbReference>
<dbReference type="PANTHER" id="PTHR13748">
    <property type="entry name" value="COBW-RELATED"/>
    <property type="match status" value="1"/>
</dbReference>
<dbReference type="PANTHER" id="PTHR13748:SF31">
    <property type="entry name" value="ZINC-REGULATED GTPASE METALLOPROTEIN ACTIVATOR 1A-RELATED"/>
    <property type="match status" value="1"/>
</dbReference>
<dbReference type="Pfam" id="PF02492">
    <property type="entry name" value="cobW"/>
    <property type="match status" value="1"/>
</dbReference>
<dbReference type="Pfam" id="PF07683">
    <property type="entry name" value="CobW_C"/>
    <property type="match status" value="1"/>
</dbReference>
<dbReference type="SUPFAM" id="SSF90002">
    <property type="entry name" value="Hypothetical protein YjiA, C-terminal domain"/>
    <property type="match status" value="1"/>
</dbReference>
<dbReference type="SUPFAM" id="SSF52540">
    <property type="entry name" value="P-loop containing nucleoside triphosphate hydrolases"/>
    <property type="match status" value="1"/>
</dbReference>
<organism>
    <name type="scientific">Mus musculus</name>
    <name type="common">Mouse</name>
    <dbReference type="NCBI Taxonomy" id="10090"/>
    <lineage>
        <taxon>Eukaryota</taxon>
        <taxon>Metazoa</taxon>
        <taxon>Chordata</taxon>
        <taxon>Craniata</taxon>
        <taxon>Vertebrata</taxon>
        <taxon>Euteleostomi</taxon>
        <taxon>Mammalia</taxon>
        <taxon>Eutheria</taxon>
        <taxon>Euarchontoglires</taxon>
        <taxon>Glires</taxon>
        <taxon>Rodentia</taxon>
        <taxon>Myomorpha</taxon>
        <taxon>Muroidea</taxon>
        <taxon>Muridae</taxon>
        <taxon>Murinae</taxon>
        <taxon>Mus</taxon>
        <taxon>Mus</taxon>
    </lineage>
</organism>
<sequence>MLPAVKTVEAEEEYAEDCPELVPIETKNQEEENLDFITKIPVTIVTGYLGAGKTTLLNYILTEQHNRKIAVILNEFGEGSAVEKSLAVSQGGELYEEWLELRNGCLCCSVKDSGLRAIENLMQKKGKFDYILLETTGLADPGAVASMFWVDAELGSDIYLDGIITVVDSKYGLKHLTEEKPDGLVNEATRQVALADMILINKTDLVSEEELNNLRTTIRSINGLGKVLETQRSRVHLSNILDLHAYDILSGISLQKKLQHVSTAPHLDQSIVTVTFEVPGSAKEECLNVFIQNLLWEKNVKNKDGHCMEVIRLKGLVSIKDKPQQMIVQGIHELYDLEESLVNWKDDAERACQLVFIGRNLDKDVLQQLFLTAVAEAEEQRTAPGRDGVCPSH</sequence>
<proteinExistence type="evidence at protein level"/>
<gene>
    <name type="primary">Zng1</name>
    <name evidence="8" type="synonym">Cbwd1</name>
</gene>
<name>ZNG1_MOUSE</name>
<evidence type="ECO:0000255" key="1"/>
<evidence type="ECO:0000269" key="2">
    <source>
    </source>
</evidence>
<evidence type="ECO:0000269" key="3">
    <source>
    </source>
</evidence>
<evidence type="ECO:0000303" key="4">
    <source>
    </source>
</evidence>
<evidence type="ECO:0000303" key="5">
    <source>
    </source>
</evidence>
<evidence type="ECO:0000305" key="6"/>
<evidence type="ECO:0000305" key="7">
    <source>
    </source>
</evidence>
<evidence type="ECO:0000312" key="8">
    <source>
        <dbReference type="MGI" id="MGI:2385089"/>
    </source>
</evidence>
<comment type="function">
    <text evidence="3">Zinc chaperone that directly transfers zinc cofactor to target metalloproteins, thereby activating them (PubMed:35584702). Catalyzes zinc insertion into the active site of methionine aminopeptidase METAP1, which function to cleave the initiator methionine from polypeptides during or after protein translation (PubMed:35584702). Mechanistically, the N-terminal psi-PxLVp motif binds to the C6H2-type zinc finger of inactive form of METAP1 (PubMed:35584702). After formation of the docked complex, zinc is transferred from the CXCC motif in the GTPase domain of ZNG1 to the zinc binding site in the peptidase domain of METAP1 in a process requiring GTP hydrolysis (PubMed:35584702). GTP/GDP exchange is required for release of active METAP1 (PubMed:35584702).</text>
</comment>
<comment type="catalytic activity">
    <reaction evidence="3">
        <text>GTP + H2O = GDP + phosphate + H(+)</text>
        <dbReference type="Rhea" id="RHEA:19669"/>
        <dbReference type="ChEBI" id="CHEBI:15377"/>
        <dbReference type="ChEBI" id="CHEBI:15378"/>
        <dbReference type="ChEBI" id="CHEBI:37565"/>
        <dbReference type="ChEBI" id="CHEBI:43474"/>
        <dbReference type="ChEBI" id="CHEBI:58189"/>
    </reaction>
    <physiologicalReaction direction="left-to-right" evidence="3">
        <dbReference type="Rhea" id="RHEA:19670"/>
    </physiologicalReaction>
</comment>
<comment type="subcellular location">
    <subcellularLocation>
        <location evidence="2">Nucleus</location>
    </subcellularLocation>
</comment>
<comment type="alternative products">
    <event type="alternative splicing"/>
    <isoform>
        <id>Q8VEH6-1</id>
        <name>1</name>
        <sequence type="displayed"/>
    </isoform>
    <isoform>
        <id>Q8VEH6-2</id>
        <name>2</name>
        <sequence type="described" ref="VSP_019735"/>
    </isoform>
</comment>
<comment type="tissue specificity">
    <text evidence="2">Present at high level in the nuclei of the ureteric bud cells in the developing kidneys.</text>
</comment>
<comment type="disruption phenotype">
    <text evidence="2 3">Although mice are viable and do not show visible phenotype, they display non-Mendelian inheritance (PubMed:35584702). Mice show impaired zinc homeostasis: they are sensitive to dietary zinc starvation and show decreased weight gain when fed a low zinc diet, due to failure to access existing zinc pools (PubMed:35584702). Impaired zinc homeostasis leads to mitochondrial dysfunction (PubMed:35584702). Mice also display kidney defects, characterized by hydronephrosis, hydroureters and duplicated ureters (PubMed:31862704).</text>
</comment>
<comment type="similarity">
    <text evidence="6">Belongs to the SIMIBI class G3E GTPase family. ZNG1 subfamily.</text>
</comment>
<accession>Q8VEH6</accession>
<accession>Q7TSA8</accession>
<accession>Q8K399</accession>
<protein>
    <recommendedName>
        <fullName evidence="5">Zinc-regulated GTPase metalloprotein activator 1</fullName>
        <ecNumber evidence="3">3.6.5.-</ecNumber>
    </recommendedName>
    <alternativeName>
        <fullName evidence="6">Cobalamin synthase W domain-containing protein 1</fullName>
        <shortName evidence="6">COBW domain-containing protein 1</shortName>
    </alternativeName>
</protein>
<keyword id="KW-0002">3D-structure</keyword>
<keyword id="KW-0025">Alternative splicing</keyword>
<keyword id="KW-0143">Chaperone</keyword>
<keyword id="KW-0342">GTP-binding</keyword>
<keyword id="KW-0378">Hydrolase</keyword>
<keyword id="KW-0547">Nucleotide-binding</keyword>
<keyword id="KW-0539">Nucleus</keyword>
<keyword id="KW-1185">Reference proteome</keyword>
<keyword id="KW-0862">Zinc</keyword>
<reference key="1">
    <citation type="journal article" date="2005" name="Science">
        <title>The transcriptional landscape of the mammalian genome.</title>
        <authorList>
            <person name="Carninci P."/>
            <person name="Kasukawa T."/>
            <person name="Katayama S."/>
            <person name="Gough J."/>
            <person name="Frith M.C."/>
            <person name="Maeda N."/>
            <person name="Oyama R."/>
            <person name="Ravasi T."/>
            <person name="Lenhard B."/>
            <person name="Wells C."/>
            <person name="Kodzius R."/>
            <person name="Shimokawa K."/>
            <person name="Bajic V.B."/>
            <person name="Brenner S.E."/>
            <person name="Batalov S."/>
            <person name="Forrest A.R."/>
            <person name="Zavolan M."/>
            <person name="Davis M.J."/>
            <person name="Wilming L.G."/>
            <person name="Aidinis V."/>
            <person name="Allen J.E."/>
            <person name="Ambesi-Impiombato A."/>
            <person name="Apweiler R."/>
            <person name="Aturaliya R.N."/>
            <person name="Bailey T.L."/>
            <person name="Bansal M."/>
            <person name="Baxter L."/>
            <person name="Beisel K.W."/>
            <person name="Bersano T."/>
            <person name="Bono H."/>
            <person name="Chalk A.M."/>
            <person name="Chiu K.P."/>
            <person name="Choudhary V."/>
            <person name="Christoffels A."/>
            <person name="Clutterbuck D.R."/>
            <person name="Crowe M.L."/>
            <person name="Dalla E."/>
            <person name="Dalrymple B.P."/>
            <person name="de Bono B."/>
            <person name="Della Gatta G."/>
            <person name="di Bernardo D."/>
            <person name="Down T."/>
            <person name="Engstrom P."/>
            <person name="Fagiolini M."/>
            <person name="Faulkner G."/>
            <person name="Fletcher C.F."/>
            <person name="Fukushima T."/>
            <person name="Furuno M."/>
            <person name="Futaki S."/>
            <person name="Gariboldi M."/>
            <person name="Georgii-Hemming P."/>
            <person name="Gingeras T.R."/>
            <person name="Gojobori T."/>
            <person name="Green R.E."/>
            <person name="Gustincich S."/>
            <person name="Harbers M."/>
            <person name="Hayashi Y."/>
            <person name="Hensch T.K."/>
            <person name="Hirokawa N."/>
            <person name="Hill D."/>
            <person name="Huminiecki L."/>
            <person name="Iacono M."/>
            <person name="Ikeo K."/>
            <person name="Iwama A."/>
            <person name="Ishikawa T."/>
            <person name="Jakt M."/>
            <person name="Kanapin A."/>
            <person name="Katoh M."/>
            <person name="Kawasawa Y."/>
            <person name="Kelso J."/>
            <person name="Kitamura H."/>
            <person name="Kitano H."/>
            <person name="Kollias G."/>
            <person name="Krishnan S.P."/>
            <person name="Kruger A."/>
            <person name="Kummerfeld S.K."/>
            <person name="Kurochkin I.V."/>
            <person name="Lareau L.F."/>
            <person name="Lazarevic D."/>
            <person name="Lipovich L."/>
            <person name="Liu J."/>
            <person name="Liuni S."/>
            <person name="McWilliam S."/>
            <person name="Madan Babu M."/>
            <person name="Madera M."/>
            <person name="Marchionni L."/>
            <person name="Matsuda H."/>
            <person name="Matsuzawa S."/>
            <person name="Miki H."/>
            <person name="Mignone F."/>
            <person name="Miyake S."/>
            <person name="Morris K."/>
            <person name="Mottagui-Tabar S."/>
            <person name="Mulder N."/>
            <person name="Nakano N."/>
            <person name="Nakauchi H."/>
            <person name="Ng P."/>
            <person name="Nilsson R."/>
            <person name="Nishiguchi S."/>
            <person name="Nishikawa S."/>
            <person name="Nori F."/>
            <person name="Ohara O."/>
            <person name="Okazaki Y."/>
            <person name="Orlando V."/>
            <person name="Pang K.C."/>
            <person name="Pavan W.J."/>
            <person name="Pavesi G."/>
            <person name="Pesole G."/>
            <person name="Petrovsky N."/>
            <person name="Piazza S."/>
            <person name="Reed J."/>
            <person name="Reid J.F."/>
            <person name="Ring B.Z."/>
            <person name="Ringwald M."/>
            <person name="Rost B."/>
            <person name="Ruan Y."/>
            <person name="Salzberg S.L."/>
            <person name="Sandelin A."/>
            <person name="Schneider C."/>
            <person name="Schoenbach C."/>
            <person name="Sekiguchi K."/>
            <person name="Semple C.A."/>
            <person name="Seno S."/>
            <person name="Sessa L."/>
            <person name="Sheng Y."/>
            <person name="Shibata Y."/>
            <person name="Shimada H."/>
            <person name="Shimada K."/>
            <person name="Silva D."/>
            <person name="Sinclair B."/>
            <person name="Sperling S."/>
            <person name="Stupka E."/>
            <person name="Sugiura K."/>
            <person name="Sultana R."/>
            <person name="Takenaka Y."/>
            <person name="Taki K."/>
            <person name="Tammoja K."/>
            <person name="Tan S.L."/>
            <person name="Tang S."/>
            <person name="Taylor M.S."/>
            <person name="Tegner J."/>
            <person name="Teichmann S.A."/>
            <person name="Ueda H.R."/>
            <person name="van Nimwegen E."/>
            <person name="Verardo R."/>
            <person name="Wei C.L."/>
            <person name="Yagi K."/>
            <person name="Yamanishi H."/>
            <person name="Zabarovsky E."/>
            <person name="Zhu S."/>
            <person name="Zimmer A."/>
            <person name="Hide W."/>
            <person name="Bult C."/>
            <person name="Grimmond S.M."/>
            <person name="Teasdale R.D."/>
            <person name="Liu E.T."/>
            <person name="Brusic V."/>
            <person name="Quackenbush J."/>
            <person name="Wahlestedt C."/>
            <person name="Mattick J.S."/>
            <person name="Hume D.A."/>
            <person name="Kai C."/>
            <person name="Sasaki D."/>
            <person name="Tomaru Y."/>
            <person name="Fukuda S."/>
            <person name="Kanamori-Katayama M."/>
            <person name="Suzuki M."/>
            <person name="Aoki J."/>
            <person name="Arakawa T."/>
            <person name="Iida J."/>
            <person name="Imamura K."/>
            <person name="Itoh M."/>
            <person name="Kato T."/>
            <person name="Kawaji H."/>
            <person name="Kawagashira N."/>
            <person name="Kawashima T."/>
            <person name="Kojima M."/>
            <person name="Kondo S."/>
            <person name="Konno H."/>
            <person name="Nakano K."/>
            <person name="Ninomiya N."/>
            <person name="Nishio T."/>
            <person name="Okada M."/>
            <person name="Plessy C."/>
            <person name="Shibata K."/>
            <person name="Shiraki T."/>
            <person name="Suzuki S."/>
            <person name="Tagami M."/>
            <person name="Waki K."/>
            <person name="Watahiki A."/>
            <person name="Okamura-Oho Y."/>
            <person name="Suzuki H."/>
            <person name="Kawai J."/>
            <person name="Hayashizaki Y."/>
        </authorList>
    </citation>
    <scope>NUCLEOTIDE SEQUENCE [LARGE SCALE MRNA] (ISOFORM 1)</scope>
    <source>
        <strain>C57BL/6J</strain>
        <tissue>Extraembryonic tissue</tissue>
    </source>
</reference>
<reference key="2">
    <citation type="journal article" date="2004" name="Genome Res.">
        <title>The status, quality, and expansion of the NIH full-length cDNA project: the Mammalian Gene Collection (MGC).</title>
        <authorList>
            <consortium name="The MGC Project Team"/>
        </authorList>
    </citation>
    <scope>NUCLEOTIDE SEQUENCE [LARGE SCALE MRNA] (ISOFORMS 1 AND 2)</scope>
    <source>
        <strain>C57BL/6J</strain>
        <strain>Czech II</strain>
        <tissue>Limb</tissue>
        <tissue>Mammary gland</tissue>
    </source>
</reference>
<reference key="3">
    <citation type="journal article" date="2010" name="Cell">
        <title>A tissue-specific atlas of mouse protein phosphorylation and expression.</title>
        <authorList>
            <person name="Huttlin E.L."/>
            <person name="Jedrychowski M.P."/>
            <person name="Elias J.E."/>
            <person name="Goswami T."/>
            <person name="Rad R."/>
            <person name="Beausoleil S.A."/>
            <person name="Villen J."/>
            <person name="Haas W."/>
            <person name="Sowa M.E."/>
            <person name="Gygi S.P."/>
        </authorList>
    </citation>
    <scope>IDENTIFICATION BY MASS SPECTROMETRY [LARGE SCALE ANALYSIS]</scope>
    <source>
        <tissue>Spleen</tissue>
        <tissue>Testis</tissue>
    </source>
</reference>
<reference key="4">
    <citation type="journal article" date="2020" name="J. Am. Soc. Nephrol.">
        <title>Deletion in the Cobalamin Synthetase W Domain-Containing Protein 1 Gene Is associated with Congenital Anomalies of the Kidney and Urinary Tract.</title>
        <authorList>
            <person name="Kanda S."/>
            <person name="Ohmuraya M."/>
            <person name="Akagawa H."/>
            <person name="Horita S."/>
            <person name="Yoshida Y."/>
            <person name="Kaneko N."/>
            <person name="Sugawara N."/>
            <person name="Ishizuka K."/>
            <person name="Miura K."/>
            <person name="Harita Y."/>
            <person name="Yamamoto T."/>
            <person name="Oka A."/>
            <person name="Araki K."/>
            <person name="Furukawa T."/>
            <person name="Hattori M."/>
        </authorList>
    </citation>
    <scope>TISSUE SPECIFICITY</scope>
    <scope>SUBCELLULAR LOCATION</scope>
    <scope>DISRUPTION PHENOTYPE</scope>
</reference>
<reference key="5">
    <citation type="journal article" date="2022" name="Cell">
        <title>Zn-regulated GTPase metalloprotein activator 1 modulates vertebrate zinc homeostasis.</title>
        <authorList>
            <person name="Weiss A."/>
            <person name="Murdoch C.C."/>
            <person name="Edmonds K.A."/>
            <person name="Jordan M.R."/>
            <person name="Monteith A.J."/>
            <person name="Perera Y.R."/>
            <person name="Rodriguez Nassif A.M."/>
            <person name="Petoletti A.M."/>
            <person name="Beavers W.N."/>
            <person name="Munneke M.J."/>
            <person name="Drury S.L."/>
            <person name="Krystofiak E.S."/>
            <person name="Thalluri K."/>
            <person name="Wu H."/>
            <person name="Kruse A.R.S."/>
            <person name="DiMarchi R.D."/>
            <person name="Caprioli R.M."/>
            <person name="Spraggins J.M."/>
            <person name="Chazin W.J."/>
            <person name="Giedroc D.P."/>
            <person name="Skaar E.P."/>
        </authorList>
    </citation>
    <scope>STRUCTURE BY NMR OF 10-30 IN COMPLEX WITH METAP1 AND ZINC</scope>
    <scope>FUNCTION</scope>
    <scope>CATALYTIC ACTIVITY</scope>
    <scope>ZINC-BINDING</scope>
    <scope>DISRUPTION PHENOTYPE</scope>
</reference>